<proteinExistence type="evidence at protein level"/>
<sequence>MAVSFNTTLHQPSLSPSCSIKLYSGLKPQSASFLASGYQNLNKEFYGRVYKSLQSGTGKASRSRVKMMPIGTPRVPYRNREEGTWQWVDIWNALYRERVIFIGQNIDEEFSNQILATMLYLDTLDDSRRIYMYLNGPGGDLTPSLAIYDTMKSLKSPVGTHCVGLAYNLAGFLLAAGEKGHRFAMPLSRIALQSPAGAARGQADDIQNEAKELSRIRDYLFNELAKNTGQPAERVFKDLSRVKRFNAEEAIEYGLIDKIVRPPRIKEDAPRQDESAGLG</sequence>
<accession>Q9XJ36</accession>
<accession>Q93ZD4</accession>
<protein>
    <recommendedName>
        <fullName evidence="10">ATP-dependent Clp protease proteolytic subunit-related protein 2, chloroplastic</fullName>
        <shortName evidence="10">ClpR2</shortName>
        <shortName>nClpP2</shortName>
    </recommendedName>
</protein>
<dbReference type="EMBL" id="AB022327">
    <property type="protein sequence ID" value="BAA82066.1"/>
    <property type="molecule type" value="mRNA"/>
</dbReference>
<dbReference type="EMBL" id="AC025416">
    <property type="protein sequence ID" value="AAF79635.1"/>
    <property type="molecule type" value="Genomic_DNA"/>
</dbReference>
<dbReference type="EMBL" id="CP002684">
    <property type="protein sequence ID" value="AEE28876.1"/>
    <property type="molecule type" value="Genomic_DNA"/>
</dbReference>
<dbReference type="EMBL" id="AY057617">
    <property type="protein sequence ID" value="AAL14412.1"/>
    <property type="molecule type" value="mRNA"/>
</dbReference>
<dbReference type="EMBL" id="AY062770">
    <property type="protein sequence ID" value="AAL32848.1"/>
    <property type="molecule type" value="mRNA"/>
</dbReference>
<dbReference type="EMBL" id="AY081641">
    <property type="protein sequence ID" value="AAM10203.1"/>
    <property type="molecule type" value="mRNA"/>
</dbReference>
<dbReference type="PIR" id="T52454">
    <property type="entry name" value="T52454"/>
</dbReference>
<dbReference type="SMR" id="Q9XJ36"/>
<dbReference type="BioGRID" id="23037">
    <property type="interactions" value="7"/>
</dbReference>
<dbReference type="FunCoup" id="Q9XJ36">
    <property type="interactions" value="1494"/>
</dbReference>
<dbReference type="IntAct" id="Q9XJ36">
    <property type="interactions" value="2"/>
</dbReference>
<dbReference type="STRING" id="3702.Q9XJ36"/>
<dbReference type="iPTMnet" id="Q9XJ36"/>
<dbReference type="PaxDb" id="3702-AT1G12410.1"/>
<dbReference type="ProteomicsDB" id="246660"/>
<dbReference type="EnsemblPlants" id="AT1G12410.1">
    <property type="protein sequence ID" value="AT1G12410.1"/>
    <property type="gene ID" value="AT1G12410"/>
</dbReference>
<dbReference type="GeneID" id="837797"/>
<dbReference type="Gramene" id="AT1G12410.1">
    <property type="protein sequence ID" value="AT1G12410.1"/>
    <property type="gene ID" value="AT1G12410"/>
</dbReference>
<dbReference type="KEGG" id="ath:AT1G12410"/>
<dbReference type="Araport" id="AT1G12410"/>
<dbReference type="TAIR" id="AT1G12410">
    <property type="gene designation" value="CLP2"/>
</dbReference>
<dbReference type="eggNOG" id="KOG0840">
    <property type="taxonomic scope" value="Eukaryota"/>
</dbReference>
<dbReference type="HOGENOM" id="CLU_058707_2_2_1"/>
<dbReference type="InParanoid" id="Q9XJ36"/>
<dbReference type="OMA" id="GDVTPCM"/>
<dbReference type="PhylomeDB" id="Q9XJ36"/>
<dbReference type="PRO" id="PR:Q9XJ36"/>
<dbReference type="Proteomes" id="UP000006548">
    <property type="component" value="Chromosome 1"/>
</dbReference>
<dbReference type="ExpressionAtlas" id="Q9XJ36">
    <property type="expression patterns" value="baseline and differential"/>
</dbReference>
<dbReference type="GO" id="GO:0009507">
    <property type="term" value="C:chloroplast"/>
    <property type="evidence" value="ECO:0007005"/>
    <property type="project" value="TAIR"/>
</dbReference>
<dbReference type="GO" id="GO:0009941">
    <property type="term" value="C:chloroplast envelope"/>
    <property type="evidence" value="ECO:0007005"/>
    <property type="project" value="TAIR"/>
</dbReference>
<dbReference type="GO" id="GO:0009570">
    <property type="term" value="C:chloroplast stroma"/>
    <property type="evidence" value="ECO:0007005"/>
    <property type="project" value="TAIR"/>
</dbReference>
<dbReference type="GO" id="GO:0009534">
    <property type="term" value="C:chloroplast thylakoid"/>
    <property type="evidence" value="ECO:0000314"/>
    <property type="project" value="TAIR"/>
</dbReference>
<dbReference type="GO" id="GO:0009840">
    <property type="term" value="C:chloroplastic endopeptidase Clp complex"/>
    <property type="evidence" value="ECO:0000314"/>
    <property type="project" value="TAIR"/>
</dbReference>
<dbReference type="GO" id="GO:0005576">
    <property type="term" value="C:extracellular region"/>
    <property type="evidence" value="ECO:0007005"/>
    <property type="project" value="TAIR"/>
</dbReference>
<dbReference type="GO" id="GO:0004176">
    <property type="term" value="F:ATP-dependent peptidase activity"/>
    <property type="evidence" value="ECO:0007669"/>
    <property type="project" value="InterPro"/>
</dbReference>
<dbReference type="GO" id="GO:0004252">
    <property type="term" value="F:serine-type endopeptidase activity"/>
    <property type="evidence" value="ECO:0007669"/>
    <property type="project" value="InterPro"/>
</dbReference>
<dbReference type="GO" id="GO:0009658">
    <property type="term" value="P:chloroplast organization"/>
    <property type="evidence" value="ECO:0000315"/>
    <property type="project" value="TAIR"/>
</dbReference>
<dbReference type="GO" id="GO:0006508">
    <property type="term" value="P:proteolysis"/>
    <property type="evidence" value="ECO:0007669"/>
    <property type="project" value="InterPro"/>
</dbReference>
<dbReference type="CDD" id="cd07017">
    <property type="entry name" value="S14_ClpP_2"/>
    <property type="match status" value="1"/>
</dbReference>
<dbReference type="FunFam" id="3.90.226.10:FF:000050">
    <property type="entry name" value="ATP-dependent Clp protease proteolytic subunit"/>
    <property type="match status" value="1"/>
</dbReference>
<dbReference type="Gene3D" id="3.90.226.10">
    <property type="entry name" value="2-enoyl-CoA Hydratase, Chain A, domain 1"/>
    <property type="match status" value="1"/>
</dbReference>
<dbReference type="HAMAP" id="MF_00444">
    <property type="entry name" value="ClpP"/>
    <property type="match status" value="1"/>
</dbReference>
<dbReference type="InterPro" id="IPR001907">
    <property type="entry name" value="ClpP"/>
</dbReference>
<dbReference type="InterPro" id="IPR029045">
    <property type="entry name" value="ClpP/crotonase-like_dom_sf"/>
</dbReference>
<dbReference type="InterPro" id="IPR023562">
    <property type="entry name" value="ClpP/TepA"/>
</dbReference>
<dbReference type="PANTHER" id="PTHR10381">
    <property type="entry name" value="ATP-DEPENDENT CLP PROTEASE PROTEOLYTIC SUBUNIT"/>
    <property type="match status" value="1"/>
</dbReference>
<dbReference type="PANTHER" id="PTHR10381:SF46">
    <property type="entry name" value="ATP-DEPENDENT CLP PROTEASE PROTEOLYTIC SUBUNIT-RELATED PROTEIN 2, CHLOROPLASTIC"/>
    <property type="match status" value="1"/>
</dbReference>
<dbReference type="Pfam" id="PF00574">
    <property type="entry name" value="CLP_protease"/>
    <property type="match status" value="1"/>
</dbReference>
<dbReference type="PRINTS" id="PR00127">
    <property type="entry name" value="CLPPROTEASEP"/>
</dbReference>
<dbReference type="SUPFAM" id="SSF52096">
    <property type="entry name" value="ClpP/crotonase"/>
    <property type="match status" value="1"/>
</dbReference>
<comment type="function">
    <text evidence="5 6">Required for chloroplast development and integrity. Involved in the regulation of plastoglobules formation.</text>
</comment>
<comment type="subunit">
    <text evidence="3 4 7 9">Component of the chloroplastic Clp protease core complex which consist of at least 16 proteins: CLPP4 (3 copies), CLPP5 (3 copies), CLPR4 (2 copies), ClpP1 (1 copy), CLPP6 (1 copy), CLPR2 (1 copy), CLPT1 (1 copy), CLPT2 (1 copy) and 3 copies of CLPP3 and/or CLPR1 and/or CLPR3 (PubMed:11278690, PubMed:14593120, PubMed:16980539). The core complex is organized in two heptameric rings, one containing CLPP3,4,5,6 in a 1:2:3:1 ratio and the other CLPP1 and CLPR1,2,3,4 in a 3:1:1:1:1 ratio (PubMed:21712416).</text>
</comment>
<comment type="subcellular location">
    <subcellularLocation>
        <location evidence="4">Plastid</location>
        <location evidence="4">Chloroplast</location>
    </subcellularLocation>
</comment>
<comment type="tissue specificity">
    <text evidence="6">Expressed at least in leaves and roots.</text>
</comment>
<comment type="induction">
    <text evidence="2">Repressed in darkness.</text>
</comment>
<comment type="disruption phenotype">
    <text evidence="8 11">Embryo lethal (Ref.8). Delayed embryogenesis and albino embryos, with seedling development blocked in the cotyledon stage (PubMed:19525416). Under heterotrophic growth conditions, seedlings develop into small albino to virescent seedlings (PubMed:19525416).</text>
</comment>
<comment type="similarity">
    <text evidence="12">Belongs to the peptidase S14 family.</text>
</comment>
<reference key="1">
    <citation type="journal article" date="1999" name="Plant Cell Physiol.">
        <title>Identification of clp genes expressed in senescing Arabidopsis leaves.</title>
        <authorList>
            <person name="Nakabayashi K."/>
            <person name="Ito M."/>
            <person name="Kiyosue T."/>
            <person name="Shinozaki K."/>
            <person name="Watanabe A."/>
        </authorList>
    </citation>
    <scope>NUCLEOTIDE SEQUENCE [MRNA]</scope>
    <scope>INDUCTION</scope>
    <source>
        <strain>cv. Columbia</strain>
    </source>
</reference>
<reference key="2">
    <citation type="journal article" date="2000" name="Nature">
        <title>Sequence and analysis of chromosome 1 of the plant Arabidopsis thaliana.</title>
        <authorList>
            <person name="Theologis A."/>
            <person name="Ecker J.R."/>
            <person name="Palm C.J."/>
            <person name="Federspiel N.A."/>
            <person name="Kaul S."/>
            <person name="White O."/>
            <person name="Alonso J."/>
            <person name="Altafi H."/>
            <person name="Araujo R."/>
            <person name="Bowman C.L."/>
            <person name="Brooks S.Y."/>
            <person name="Buehler E."/>
            <person name="Chan A."/>
            <person name="Chao Q."/>
            <person name="Chen H."/>
            <person name="Cheuk R.F."/>
            <person name="Chin C.W."/>
            <person name="Chung M.K."/>
            <person name="Conn L."/>
            <person name="Conway A.B."/>
            <person name="Conway A.R."/>
            <person name="Creasy T.H."/>
            <person name="Dewar K."/>
            <person name="Dunn P."/>
            <person name="Etgu P."/>
            <person name="Feldblyum T.V."/>
            <person name="Feng J.-D."/>
            <person name="Fong B."/>
            <person name="Fujii C.Y."/>
            <person name="Gill J.E."/>
            <person name="Goldsmith A.D."/>
            <person name="Haas B."/>
            <person name="Hansen N.F."/>
            <person name="Hughes B."/>
            <person name="Huizar L."/>
            <person name="Hunter J.L."/>
            <person name="Jenkins J."/>
            <person name="Johnson-Hopson C."/>
            <person name="Khan S."/>
            <person name="Khaykin E."/>
            <person name="Kim C.J."/>
            <person name="Koo H.L."/>
            <person name="Kremenetskaia I."/>
            <person name="Kurtz D.B."/>
            <person name="Kwan A."/>
            <person name="Lam B."/>
            <person name="Langin-Hooper S."/>
            <person name="Lee A."/>
            <person name="Lee J.M."/>
            <person name="Lenz C.A."/>
            <person name="Li J.H."/>
            <person name="Li Y.-P."/>
            <person name="Lin X."/>
            <person name="Liu S.X."/>
            <person name="Liu Z.A."/>
            <person name="Luros J.S."/>
            <person name="Maiti R."/>
            <person name="Marziali A."/>
            <person name="Militscher J."/>
            <person name="Miranda M."/>
            <person name="Nguyen M."/>
            <person name="Nierman W.C."/>
            <person name="Osborne B.I."/>
            <person name="Pai G."/>
            <person name="Peterson J."/>
            <person name="Pham P.K."/>
            <person name="Rizzo M."/>
            <person name="Rooney T."/>
            <person name="Rowley D."/>
            <person name="Sakano H."/>
            <person name="Salzberg S.L."/>
            <person name="Schwartz J.R."/>
            <person name="Shinn P."/>
            <person name="Southwick A.M."/>
            <person name="Sun H."/>
            <person name="Tallon L.J."/>
            <person name="Tambunga G."/>
            <person name="Toriumi M.J."/>
            <person name="Town C.D."/>
            <person name="Utterback T."/>
            <person name="Van Aken S."/>
            <person name="Vaysberg M."/>
            <person name="Vysotskaia V.S."/>
            <person name="Walker M."/>
            <person name="Wu D."/>
            <person name="Yu G."/>
            <person name="Fraser C.M."/>
            <person name="Venter J.C."/>
            <person name="Davis R.W."/>
        </authorList>
    </citation>
    <scope>NUCLEOTIDE SEQUENCE [LARGE SCALE GENOMIC DNA]</scope>
    <source>
        <strain>cv. Columbia</strain>
    </source>
</reference>
<reference key="3">
    <citation type="journal article" date="2017" name="Plant J.">
        <title>Araport11: a complete reannotation of the Arabidopsis thaliana reference genome.</title>
        <authorList>
            <person name="Cheng C.Y."/>
            <person name="Krishnakumar V."/>
            <person name="Chan A.P."/>
            <person name="Thibaud-Nissen F."/>
            <person name="Schobel S."/>
            <person name="Town C.D."/>
        </authorList>
    </citation>
    <scope>GENOME REANNOTATION</scope>
    <source>
        <strain>cv. Columbia</strain>
    </source>
</reference>
<reference key="4">
    <citation type="journal article" date="2003" name="Science">
        <title>Empirical analysis of transcriptional activity in the Arabidopsis genome.</title>
        <authorList>
            <person name="Yamada K."/>
            <person name="Lim J."/>
            <person name="Dale J.M."/>
            <person name="Chen H."/>
            <person name="Shinn P."/>
            <person name="Palm C.J."/>
            <person name="Southwick A.M."/>
            <person name="Wu H.C."/>
            <person name="Kim C.J."/>
            <person name="Nguyen M."/>
            <person name="Pham P.K."/>
            <person name="Cheuk R.F."/>
            <person name="Karlin-Newmann G."/>
            <person name="Liu S.X."/>
            <person name="Lam B."/>
            <person name="Sakano H."/>
            <person name="Wu T."/>
            <person name="Yu G."/>
            <person name="Miranda M."/>
            <person name="Quach H.L."/>
            <person name="Tripp M."/>
            <person name="Chang C.H."/>
            <person name="Lee J.M."/>
            <person name="Toriumi M.J."/>
            <person name="Chan M.M."/>
            <person name="Tang C.C."/>
            <person name="Onodera C.S."/>
            <person name="Deng J.M."/>
            <person name="Akiyama K."/>
            <person name="Ansari Y."/>
            <person name="Arakawa T."/>
            <person name="Banh J."/>
            <person name="Banno F."/>
            <person name="Bowser L."/>
            <person name="Brooks S.Y."/>
            <person name="Carninci P."/>
            <person name="Chao Q."/>
            <person name="Choy N."/>
            <person name="Enju A."/>
            <person name="Goldsmith A.D."/>
            <person name="Gurjal M."/>
            <person name="Hansen N.F."/>
            <person name="Hayashizaki Y."/>
            <person name="Johnson-Hopson C."/>
            <person name="Hsuan V.W."/>
            <person name="Iida K."/>
            <person name="Karnes M."/>
            <person name="Khan S."/>
            <person name="Koesema E."/>
            <person name="Ishida J."/>
            <person name="Jiang P.X."/>
            <person name="Jones T."/>
            <person name="Kawai J."/>
            <person name="Kamiya A."/>
            <person name="Meyers C."/>
            <person name="Nakajima M."/>
            <person name="Narusaka M."/>
            <person name="Seki M."/>
            <person name="Sakurai T."/>
            <person name="Satou M."/>
            <person name="Tamse R."/>
            <person name="Vaysberg M."/>
            <person name="Wallender E.K."/>
            <person name="Wong C."/>
            <person name="Yamamura Y."/>
            <person name="Yuan S."/>
            <person name="Shinozaki K."/>
            <person name="Davis R.W."/>
            <person name="Theologis A."/>
            <person name="Ecker J.R."/>
        </authorList>
    </citation>
    <scope>NUCLEOTIDE SEQUENCE [LARGE SCALE MRNA]</scope>
    <source>
        <strain>cv. Columbia</strain>
    </source>
</reference>
<reference key="5">
    <citation type="journal article" date="2001" name="J. Biol. Chem.">
        <title>Identification of a 350-kDa ClpP protease complex with 10 different Clp isoforms in chloroplasts of Arabidopsis thaliana.</title>
        <authorList>
            <person name="Peltier J.-B."/>
            <person name="Ytterberg J."/>
            <person name="Liberles D.A."/>
            <person name="Roepstorff P."/>
            <person name="van Wijk K.J."/>
        </authorList>
    </citation>
    <scope>PROTEIN SEQUENCE OF 81-96 AND 99-129</scope>
    <scope>SUBUNIT</scope>
    <scope>IDENTIFICATION BY MASS SPECTROMETRY</scope>
</reference>
<reference key="6">
    <citation type="journal article" date="2001" name="Plant Physiol.">
        <title>Chloroplast and mitochondrial proteases in Arabidopsis. A proposed nomenclature.</title>
        <authorList>
            <person name="Adam Z."/>
            <person name="Adamska I."/>
            <person name="Nakabayashi K."/>
            <person name="Ostersetzer O."/>
            <person name="Haussuhl K."/>
            <person name="Manuell A."/>
            <person name="Zheng B."/>
            <person name="Vallon O."/>
            <person name="Rodermel S.R."/>
            <person name="Shinozaki K."/>
            <person name="Clarke A.K."/>
        </authorList>
    </citation>
    <scope>GENE FAMILY</scope>
    <scope>NOMENCLATURE</scope>
</reference>
<reference key="7">
    <citation type="journal article" date="2004" name="J. Biol. Chem.">
        <title>Clp protease complexes from photosynthetic and non-photosynthetic plastids and mitochondria of plants, their predicted three-dimensional structures, and functional implications.</title>
        <authorList>
            <person name="Peltier J.-B."/>
            <person name="Ripoll D.R."/>
            <person name="Friso G."/>
            <person name="Rudella A."/>
            <person name="Cai Y."/>
            <person name="Ytterberg J."/>
            <person name="Giacomelli L."/>
            <person name="Pillardy J."/>
            <person name="van Wijk K.J."/>
        </authorList>
    </citation>
    <scope>IDENTIFICATION BY MASS SPECTROMETRY</scope>
    <scope>SUBUNIT</scope>
    <scope>SUBCELLULAR LOCATION</scope>
    <scope>3D-STRUCTURE MODELING</scope>
</reference>
<reference key="8">
    <citation type="journal article" date="2005" name="Physiol. Plantarum">
        <title>The ATP-dependent Clp protease in chloroplasts of higher plants.</title>
        <authorList>
            <person name="Clarke A.K."/>
            <person name="MacDonald T.M."/>
            <person name="Sjoegren L.L."/>
        </authorList>
    </citation>
    <scope>NOMENCLATURE</scope>
    <scope>DISRUPTION PHENOTYPE</scope>
</reference>
<reference key="9">
    <citation type="journal article" date="2006" name="Plant Cell">
        <title>Downregulation of ClpR2 leads to reduced accumulation of the ClpPRS protease complex and defects in chloroplast biogenesis in Arabidopsis.</title>
        <authorList>
            <person name="Rudella A."/>
            <person name="Friso G."/>
            <person name="Alonso J.M."/>
            <person name="Ecker J.R."/>
            <person name="van Wijk K.J."/>
        </authorList>
    </citation>
    <scope>FUNCTION</scope>
    <scope>IDENTIFICATION BY MASS SPECTROMETRY</scope>
    <scope>TISSUE SPECIFICITY</scope>
</reference>
<reference key="10">
    <citation type="journal article" date="2006" name="Plant Cell">
        <title>Structural and functional insights into the chloroplast ATP-dependent Clp protease in Arabidopsis.</title>
        <authorList>
            <person name="Sjoegren L.L.E."/>
            <person name="Stanne T.M."/>
            <person name="Zheng B."/>
            <person name="Sutinen S."/>
            <person name="Clarke A.K."/>
        </authorList>
    </citation>
    <scope>SUBUNIT</scope>
</reference>
<reference key="11">
    <citation type="journal article" date="2006" name="Plant Physiol.">
        <title>Protein profiling of plastoglobules in chloroplasts and chromoplasts. A surprising site for differential accumulation of metabolic enzymes.</title>
        <authorList>
            <person name="Ytterberg A.J."/>
            <person name="Peltier J.-B."/>
            <person name="van Wijk K.J."/>
        </authorList>
    </citation>
    <scope>FUNCTION</scope>
    <source>
        <strain>cv. Columbia</strain>
    </source>
</reference>
<reference key="12">
    <citation type="journal article" date="2009" name="Plant Cell">
        <title>Subunits of the plastid ClpPR protease complex have differential contributions to embryogenesis, plastid biogenesis, and plant development in Arabidopsis.</title>
        <authorList>
            <person name="Kim J."/>
            <person name="Rudella A."/>
            <person name="Ramirez Rodriguez V."/>
            <person name="Zybailov B."/>
            <person name="Olinares P.D."/>
            <person name="van Wijk K.J."/>
        </authorList>
    </citation>
    <scope>DISRUPTION PHENOTYPE</scope>
</reference>
<reference key="13">
    <citation type="journal article" date="2011" name="Plant Cell">
        <title>Subunit stoichiometry, evolution, and functional implications of an asymmetric plant plastid ClpP/R protease complex in Arabidopsis.</title>
        <authorList>
            <person name="Olinares P.D."/>
            <person name="Kim J."/>
            <person name="Davis J.I."/>
            <person name="van Wijk K.J."/>
        </authorList>
    </citation>
    <scope>IDENTIFICATION BY MASS SPECTROMETRY</scope>
    <scope>SUBUNIT</scope>
</reference>
<reference key="14">
    <citation type="journal article" date="2012" name="Physiol. Plantarum">
        <title>The chloroplast ATP-dependent Clp protease in vascular plants - new dimensions and future challenges.</title>
        <authorList>
            <person name="Clarke A.K."/>
        </authorList>
    </citation>
    <scope>REVIEW</scope>
</reference>
<organism>
    <name type="scientific">Arabidopsis thaliana</name>
    <name type="common">Mouse-ear cress</name>
    <dbReference type="NCBI Taxonomy" id="3702"/>
    <lineage>
        <taxon>Eukaryota</taxon>
        <taxon>Viridiplantae</taxon>
        <taxon>Streptophyta</taxon>
        <taxon>Embryophyta</taxon>
        <taxon>Tracheophyta</taxon>
        <taxon>Spermatophyta</taxon>
        <taxon>Magnoliopsida</taxon>
        <taxon>eudicotyledons</taxon>
        <taxon>Gunneridae</taxon>
        <taxon>Pentapetalae</taxon>
        <taxon>rosids</taxon>
        <taxon>malvids</taxon>
        <taxon>Brassicales</taxon>
        <taxon>Brassicaceae</taxon>
        <taxon>Camelineae</taxon>
        <taxon>Arabidopsis</taxon>
    </lineage>
</organism>
<feature type="transit peptide" description="Chloroplast" evidence="1">
    <location>
        <begin position="1"/>
        <end position="54"/>
    </location>
</feature>
<feature type="chain" id="PRO_0000308983" description="ATP-dependent Clp protease proteolytic subunit-related protein 2, chloroplastic">
    <location>
        <begin position="55"/>
        <end position="279"/>
    </location>
</feature>
<feature type="sequence conflict" description="In Ref. 4; AAL14412." evidence="12" ref="4">
    <original>D</original>
    <variation>G</variation>
    <location>
        <position position="126"/>
    </location>
</feature>
<keyword id="KW-0150">Chloroplast</keyword>
<keyword id="KW-0903">Direct protein sequencing</keyword>
<keyword id="KW-0934">Plastid</keyword>
<keyword id="KW-1185">Reference proteome</keyword>
<keyword id="KW-0809">Transit peptide</keyword>
<evidence type="ECO:0000255" key="1"/>
<evidence type="ECO:0000269" key="2">
    <source>
    </source>
</evidence>
<evidence type="ECO:0000269" key="3">
    <source>
    </source>
</evidence>
<evidence type="ECO:0000269" key="4">
    <source>
    </source>
</evidence>
<evidence type="ECO:0000269" key="5">
    <source>
    </source>
</evidence>
<evidence type="ECO:0000269" key="6">
    <source>
    </source>
</evidence>
<evidence type="ECO:0000269" key="7">
    <source>
    </source>
</evidence>
<evidence type="ECO:0000269" key="8">
    <source>
    </source>
</evidence>
<evidence type="ECO:0000269" key="9">
    <source>
    </source>
</evidence>
<evidence type="ECO:0000303" key="10">
    <source>
    </source>
</evidence>
<evidence type="ECO:0000303" key="11">
    <source ref="8"/>
</evidence>
<evidence type="ECO:0000305" key="12"/>
<evidence type="ECO:0000312" key="13">
    <source>
        <dbReference type="Araport" id="AT1G12410"/>
    </source>
</evidence>
<evidence type="ECO:0000312" key="14">
    <source>
        <dbReference type="EMBL" id="AAF79635.1"/>
    </source>
</evidence>
<gene>
    <name evidence="10" type="primary">CLPR2</name>
    <name type="synonym">NCLPP2</name>
    <name evidence="13" type="ordered locus">At1g12410</name>
    <name evidence="14" type="ORF">F5O11.13</name>
</gene>
<name>CLPR2_ARATH</name>